<accession>A9IU51</accession>
<comment type="function">
    <text evidence="1">Could be a nuclease involved in processing of the 5'-end of pre-16S rRNA.</text>
</comment>
<comment type="subcellular location">
    <subcellularLocation>
        <location evidence="1">Cytoplasm</location>
    </subcellularLocation>
</comment>
<comment type="similarity">
    <text evidence="1">Belongs to the YqgF nuclease family.</text>
</comment>
<organism>
    <name type="scientific">Bartonella tribocorum (strain CIP 105476 / IBS 506)</name>
    <dbReference type="NCBI Taxonomy" id="382640"/>
    <lineage>
        <taxon>Bacteria</taxon>
        <taxon>Pseudomonadati</taxon>
        <taxon>Pseudomonadota</taxon>
        <taxon>Alphaproteobacteria</taxon>
        <taxon>Hyphomicrobiales</taxon>
        <taxon>Bartonellaceae</taxon>
        <taxon>Bartonella</taxon>
    </lineage>
</organism>
<dbReference type="EC" id="3.1.-.-" evidence="1"/>
<dbReference type="EMBL" id="AM260525">
    <property type="protein sequence ID" value="CAK01513.1"/>
    <property type="molecule type" value="Genomic_DNA"/>
</dbReference>
<dbReference type="RefSeq" id="WP_012231716.1">
    <property type="nucleotide sequence ID" value="NC_010161.1"/>
</dbReference>
<dbReference type="SMR" id="A9IU51"/>
<dbReference type="KEGG" id="btr:BT_1141"/>
<dbReference type="eggNOG" id="COG0816">
    <property type="taxonomic scope" value="Bacteria"/>
</dbReference>
<dbReference type="HOGENOM" id="CLU_098240_1_1_5"/>
<dbReference type="Proteomes" id="UP000001592">
    <property type="component" value="Chromosome"/>
</dbReference>
<dbReference type="GO" id="GO:0005829">
    <property type="term" value="C:cytosol"/>
    <property type="evidence" value="ECO:0007669"/>
    <property type="project" value="TreeGrafter"/>
</dbReference>
<dbReference type="GO" id="GO:0004518">
    <property type="term" value="F:nuclease activity"/>
    <property type="evidence" value="ECO:0007669"/>
    <property type="project" value="UniProtKB-KW"/>
</dbReference>
<dbReference type="GO" id="GO:0000967">
    <property type="term" value="P:rRNA 5'-end processing"/>
    <property type="evidence" value="ECO:0007669"/>
    <property type="project" value="UniProtKB-UniRule"/>
</dbReference>
<dbReference type="CDD" id="cd16964">
    <property type="entry name" value="YqgF"/>
    <property type="match status" value="1"/>
</dbReference>
<dbReference type="Gene3D" id="3.30.420.140">
    <property type="entry name" value="YqgF/RNase H-like domain"/>
    <property type="match status" value="1"/>
</dbReference>
<dbReference type="HAMAP" id="MF_00651">
    <property type="entry name" value="Nuclease_YqgF"/>
    <property type="match status" value="1"/>
</dbReference>
<dbReference type="InterPro" id="IPR012337">
    <property type="entry name" value="RNaseH-like_sf"/>
</dbReference>
<dbReference type="InterPro" id="IPR005227">
    <property type="entry name" value="YqgF"/>
</dbReference>
<dbReference type="InterPro" id="IPR006641">
    <property type="entry name" value="YqgF/RNaseH-like_dom"/>
</dbReference>
<dbReference type="InterPro" id="IPR037027">
    <property type="entry name" value="YqgF/RNaseH-like_dom_sf"/>
</dbReference>
<dbReference type="NCBIfam" id="TIGR00250">
    <property type="entry name" value="RNAse_H_YqgF"/>
    <property type="match status" value="1"/>
</dbReference>
<dbReference type="PANTHER" id="PTHR33317">
    <property type="entry name" value="POLYNUCLEOTIDYL TRANSFERASE, RIBONUCLEASE H-LIKE SUPERFAMILY PROTEIN"/>
    <property type="match status" value="1"/>
</dbReference>
<dbReference type="PANTHER" id="PTHR33317:SF4">
    <property type="entry name" value="POLYNUCLEOTIDYL TRANSFERASE, RIBONUCLEASE H-LIKE SUPERFAMILY PROTEIN"/>
    <property type="match status" value="1"/>
</dbReference>
<dbReference type="Pfam" id="PF03652">
    <property type="entry name" value="RuvX"/>
    <property type="match status" value="1"/>
</dbReference>
<dbReference type="SMART" id="SM00732">
    <property type="entry name" value="YqgFc"/>
    <property type="match status" value="1"/>
</dbReference>
<dbReference type="SUPFAM" id="SSF53098">
    <property type="entry name" value="Ribonuclease H-like"/>
    <property type="match status" value="1"/>
</dbReference>
<feature type="chain" id="PRO_1000082734" description="Putative pre-16S rRNA nuclease">
    <location>
        <begin position="1"/>
        <end position="156"/>
    </location>
</feature>
<proteinExistence type="inferred from homology"/>
<reference key="1">
    <citation type="journal article" date="2007" name="Nat. Genet.">
        <title>Genomic analysis of Bartonella identifies type IV secretion systems as host adaptability factors.</title>
        <authorList>
            <person name="Saenz H.L."/>
            <person name="Engel P."/>
            <person name="Stoeckli M.C."/>
            <person name="Lanz C."/>
            <person name="Raddatz G."/>
            <person name="Vayssier-Taussat M."/>
            <person name="Birtles R."/>
            <person name="Schuster S.C."/>
            <person name="Dehio C."/>
        </authorList>
    </citation>
    <scope>NUCLEOTIDE SEQUENCE [LARGE SCALE GENOMIC DNA]</scope>
    <source>
        <strain>CIP 105476 / IBS 506</strain>
    </source>
</reference>
<sequence>MTVININEIMTHLLPGQTIAGLDLGTKTIGIAISDMGLTVSNPRPVLQRKKFTEDAHRLIKIFDHENVGVIVIGLPLNMNGSSGSRVQATRAFVSNMKAYTKIPFVFWDERLSTIAAERSLLEMNVSRIKRARRIDSAAAAFILQGALNRIENLHS</sequence>
<protein>
    <recommendedName>
        <fullName evidence="1">Putative pre-16S rRNA nuclease</fullName>
        <ecNumber evidence="1">3.1.-.-</ecNumber>
    </recommendedName>
</protein>
<keyword id="KW-0963">Cytoplasm</keyword>
<keyword id="KW-0378">Hydrolase</keyword>
<keyword id="KW-0540">Nuclease</keyword>
<keyword id="KW-0690">Ribosome biogenesis</keyword>
<name>YQGF_BART1</name>
<gene>
    <name type="ordered locus">BT_1141</name>
</gene>
<evidence type="ECO:0000255" key="1">
    <source>
        <dbReference type="HAMAP-Rule" id="MF_00651"/>
    </source>
</evidence>